<accession>Q488N6</accession>
<feature type="chain" id="PRO_0000234967" description="Serine hydroxymethyltransferase 1">
    <location>
        <begin position="1"/>
        <end position="419"/>
    </location>
</feature>
<feature type="binding site" evidence="1">
    <location>
        <position position="121"/>
    </location>
    <ligand>
        <name>(6S)-5,6,7,8-tetrahydrofolate</name>
        <dbReference type="ChEBI" id="CHEBI:57453"/>
    </ligand>
</feature>
<feature type="binding site" evidence="1">
    <location>
        <begin position="125"/>
        <end position="127"/>
    </location>
    <ligand>
        <name>(6S)-5,6,7,8-tetrahydrofolate</name>
        <dbReference type="ChEBI" id="CHEBI:57453"/>
    </ligand>
</feature>
<feature type="binding site" evidence="1">
    <location>
        <begin position="356"/>
        <end position="358"/>
    </location>
    <ligand>
        <name>(6S)-5,6,7,8-tetrahydrofolate</name>
        <dbReference type="ChEBI" id="CHEBI:57453"/>
    </ligand>
</feature>
<feature type="site" description="Plays an important role in substrate specificity" evidence="1">
    <location>
        <position position="229"/>
    </location>
</feature>
<feature type="modified residue" description="N6-(pyridoxal phosphate)lysine" evidence="1">
    <location>
        <position position="230"/>
    </location>
</feature>
<organism>
    <name type="scientific">Colwellia psychrerythraea (strain 34H / ATCC BAA-681)</name>
    <name type="common">Vibrio psychroerythus</name>
    <dbReference type="NCBI Taxonomy" id="167879"/>
    <lineage>
        <taxon>Bacteria</taxon>
        <taxon>Pseudomonadati</taxon>
        <taxon>Pseudomonadota</taxon>
        <taxon>Gammaproteobacteria</taxon>
        <taxon>Alteromonadales</taxon>
        <taxon>Colwelliaceae</taxon>
        <taxon>Colwellia</taxon>
    </lineage>
</organism>
<protein>
    <recommendedName>
        <fullName evidence="1">Serine hydroxymethyltransferase 1</fullName>
        <shortName evidence="1">SHMT 1</shortName>
        <shortName evidence="1">Serine methylase 1</shortName>
        <ecNumber evidence="1">2.1.2.1</ecNumber>
    </recommendedName>
</protein>
<proteinExistence type="inferred from homology"/>
<comment type="function">
    <text evidence="1">Catalyzes the reversible interconversion of serine and glycine with tetrahydrofolate (THF) serving as the one-carbon carrier. This reaction serves as the major source of one-carbon groups required for the biosynthesis of purines, thymidylate, methionine, and other important biomolecules. Also exhibits THF-independent aldolase activity toward beta-hydroxyamino acids, producing glycine and aldehydes, via a retro-aldol mechanism.</text>
</comment>
<comment type="catalytic activity">
    <reaction evidence="1">
        <text>(6R)-5,10-methylene-5,6,7,8-tetrahydrofolate + glycine + H2O = (6S)-5,6,7,8-tetrahydrofolate + L-serine</text>
        <dbReference type="Rhea" id="RHEA:15481"/>
        <dbReference type="ChEBI" id="CHEBI:15377"/>
        <dbReference type="ChEBI" id="CHEBI:15636"/>
        <dbReference type="ChEBI" id="CHEBI:33384"/>
        <dbReference type="ChEBI" id="CHEBI:57305"/>
        <dbReference type="ChEBI" id="CHEBI:57453"/>
        <dbReference type="EC" id="2.1.2.1"/>
    </reaction>
</comment>
<comment type="cofactor">
    <cofactor evidence="1">
        <name>pyridoxal 5'-phosphate</name>
        <dbReference type="ChEBI" id="CHEBI:597326"/>
    </cofactor>
</comment>
<comment type="pathway">
    <text evidence="1">One-carbon metabolism; tetrahydrofolate interconversion.</text>
</comment>
<comment type="pathway">
    <text evidence="1">Amino-acid biosynthesis; glycine biosynthesis; glycine from L-serine: step 1/1.</text>
</comment>
<comment type="subunit">
    <text evidence="1">Homodimer.</text>
</comment>
<comment type="subcellular location">
    <subcellularLocation>
        <location evidence="1">Cytoplasm</location>
    </subcellularLocation>
</comment>
<comment type="similarity">
    <text evidence="1">Belongs to the SHMT family.</text>
</comment>
<evidence type="ECO:0000255" key="1">
    <source>
        <dbReference type="HAMAP-Rule" id="MF_00051"/>
    </source>
</evidence>
<keyword id="KW-0028">Amino-acid biosynthesis</keyword>
<keyword id="KW-0963">Cytoplasm</keyword>
<keyword id="KW-0554">One-carbon metabolism</keyword>
<keyword id="KW-0663">Pyridoxal phosphate</keyword>
<keyword id="KW-0808">Transferase</keyword>
<name>GLYA1_COLP3</name>
<gene>
    <name evidence="1" type="primary">glyA1</name>
    <name type="ordered locus">CPS_0728</name>
</gene>
<dbReference type="EC" id="2.1.2.1" evidence="1"/>
<dbReference type="EMBL" id="CP000083">
    <property type="protein sequence ID" value="AAZ24281.1"/>
    <property type="molecule type" value="Genomic_DNA"/>
</dbReference>
<dbReference type="SMR" id="Q488N6"/>
<dbReference type="STRING" id="167879.CPS_0728"/>
<dbReference type="KEGG" id="cps:CPS_0728"/>
<dbReference type="eggNOG" id="COG0112">
    <property type="taxonomic scope" value="Bacteria"/>
</dbReference>
<dbReference type="HOGENOM" id="CLU_022477_2_1_6"/>
<dbReference type="UniPathway" id="UPA00193"/>
<dbReference type="UniPathway" id="UPA00288">
    <property type="reaction ID" value="UER01023"/>
</dbReference>
<dbReference type="Proteomes" id="UP000000547">
    <property type="component" value="Chromosome"/>
</dbReference>
<dbReference type="GO" id="GO:0005829">
    <property type="term" value="C:cytosol"/>
    <property type="evidence" value="ECO:0007669"/>
    <property type="project" value="TreeGrafter"/>
</dbReference>
<dbReference type="GO" id="GO:0004372">
    <property type="term" value="F:glycine hydroxymethyltransferase activity"/>
    <property type="evidence" value="ECO:0007669"/>
    <property type="project" value="UniProtKB-UniRule"/>
</dbReference>
<dbReference type="GO" id="GO:0030170">
    <property type="term" value="F:pyridoxal phosphate binding"/>
    <property type="evidence" value="ECO:0007669"/>
    <property type="project" value="UniProtKB-UniRule"/>
</dbReference>
<dbReference type="GO" id="GO:0019264">
    <property type="term" value="P:glycine biosynthetic process from serine"/>
    <property type="evidence" value="ECO:0007669"/>
    <property type="project" value="UniProtKB-UniRule"/>
</dbReference>
<dbReference type="GO" id="GO:0035999">
    <property type="term" value="P:tetrahydrofolate interconversion"/>
    <property type="evidence" value="ECO:0007669"/>
    <property type="project" value="UniProtKB-UniRule"/>
</dbReference>
<dbReference type="CDD" id="cd00378">
    <property type="entry name" value="SHMT"/>
    <property type="match status" value="1"/>
</dbReference>
<dbReference type="FunFam" id="3.40.640.10:FF:000001">
    <property type="entry name" value="Serine hydroxymethyltransferase"/>
    <property type="match status" value="1"/>
</dbReference>
<dbReference type="FunFam" id="3.90.1150.10:FF:000003">
    <property type="entry name" value="Serine hydroxymethyltransferase"/>
    <property type="match status" value="1"/>
</dbReference>
<dbReference type="Gene3D" id="3.90.1150.10">
    <property type="entry name" value="Aspartate Aminotransferase, domain 1"/>
    <property type="match status" value="1"/>
</dbReference>
<dbReference type="Gene3D" id="3.40.640.10">
    <property type="entry name" value="Type I PLP-dependent aspartate aminotransferase-like (Major domain)"/>
    <property type="match status" value="1"/>
</dbReference>
<dbReference type="HAMAP" id="MF_00051">
    <property type="entry name" value="SHMT"/>
    <property type="match status" value="1"/>
</dbReference>
<dbReference type="InterPro" id="IPR015424">
    <property type="entry name" value="PyrdxlP-dep_Trfase"/>
</dbReference>
<dbReference type="InterPro" id="IPR015421">
    <property type="entry name" value="PyrdxlP-dep_Trfase_major"/>
</dbReference>
<dbReference type="InterPro" id="IPR015422">
    <property type="entry name" value="PyrdxlP-dep_Trfase_small"/>
</dbReference>
<dbReference type="InterPro" id="IPR001085">
    <property type="entry name" value="Ser_HO-MeTrfase"/>
</dbReference>
<dbReference type="InterPro" id="IPR049943">
    <property type="entry name" value="Ser_HO-MeTrfase-like"/>
</dbReference>
<dbReference type="InterPro" id="IPR019798">
    <property type="entry name" value="Ser_HO-MeTrfase_PLP_BS"/>
</dbReference>
<dbReference type="InterPro" id="IPR039429">
    <property type="entry name" value="SHMT-like_dom"/>
</dbReference>
<dbReference type="NCBIfam" id="NF000586">
    <property type="entry name" value="PRK00011.1"/>
    <property type="match status" value="1"/>
</dbReference>
<dbReference type="PANTHER" id="PTHR11680">
    <property type="entry name" value="SERINE HYDROXYMETHYLTRANSFERASE"/>
    <property type="match status" value="1"/>
</dbReference>
<dbReference type="PANTHER" id="PTHR11680:SF50">
    <property type="entry name" value="SERINE HYDROXYMETHYLTRANSFERASE"/>
    <property type="match status" value="1"/>
</dbReference>
<dbReference type="Pfam" id="PF00464">
    <property type="entry name" value="SHMT"/>
    <property type="match status" value="1"/>
</dbReference>
<dbReference type="PIRSF" id="PIRSF000412">
    <property type="entry name" value="SHMT"/>
    <property type="match status" value="1"/>
</dbReference>
<dbReference type="SUPFAM" id="SSF53383">
    <property type="entry name" value="PLP-dependent transferases"/>
    <property type="match status" value="1"/>
</dbReference>
<dbReference type="PROSITE" id="PS00096">
    <property type="entry name" value="SHMT"/>
    <property type="match status" value="1"/>
</dbReference>
<reference key="1">
    <citation type="journal article" date="2005" name="Proc. Natl. Acad. Sci. U.S.A.">
        <title>The psychrophilic lifestyle as revealed by the genome sequence of Colwellia psychrerythraea 34H through genomic and proteomic analyses.</title>
        <authorList>
            <person name="Methe B.A."/>
            <person name="Nelson K.E."/>
            <person name="Deming J.W."/>
            <person name="Momen B."/>
            <person name="Melamud E."/>
            <person name="Zhang X."/>
            <person name="Moult J."/>
            <person name="Madupu R."/>
            <person name="Nelson W.C."/>
            <person name="Dodson R.J."/>
            <person name="Brinkac L.M."/>
            <person name="Daugherty S.C."/>
            <person name="Durkin A.S."/>
            <person name="DeBoy R.T."/>
            <person name="Kolonay J.F."/>
            <person name="Sullivan S.A."/>
            <person name="Zhou L."/>
            <person name="Davidsen T.M."/>
            <person name="Wu M."/>
            <person name="Huston A.L."/>
            <person name="Lewis M."/>
            <person name="Weaver B."/>
            <person name="Weidman J.F."/>
            <person name="Khouri H."/>
            <person name="Utterback T.R."/>
            <person name="Feldblyum T.V."/>
            <person name="Fraser C.M."/>
        </authorList>
    </citation>
    <scope>NUCLEOTIDE SEQUENCE [LARGE SCALE GENOMIC DNA]</scope>
    <source>
        <strain>34H / ATCC BAA-681</strain>
    </source>
</reference>
<sequence length="419" mass="45555">MFTRDMNIATFDPELFEAMSNEVVRQEEHIELIASENYCSPRVLEAQGSQLTNKYAEGYPGKRYYGGCEYVDIAEQLAIDRAKELFGATYANVQPHAGSQANAAVFQALVTPGGKVLGMSLAHGGHLTHGSHVSFSGKSYEAFQYGLHPETGDIDYEELERLAVEHKPEMIIGGFSAFSGVVDWARMRTIADKVGAYFFVDMAHVAGLIAAGLYPNPVPHAHVVTTTTHKTLAGPRGGLIISGCDDEAIYKKLNSAVFPGGQGGPLMHIIAAKAVAFKEALSPEFKVYQQNVLANALAMVDVLQDRGYKVVSNGTQNHLLLLDLIDKDITGKDADAALGKAHITVNKNSVPNDPRSPFVTSGLRLGTPAITRRGFGIEETKALTGWICDILDDIENEDVSKRVQDQVKELCARFPVYQK</sequence>